<gene>
    <name type="primary">WAXY</name>
    <name type="synonym">WX</name>
    <name type="synonym">WX-B</name>
    <name type="ordered locus">Os06g0133000</name>
    <name type="ordered locus">LOC_Os06g04200</name>
    <name type="ORF">134P10.7</name>
    <name type="ORF">P0679C08.19</name>
</gene>
<evidence type="ECO:0000250" key="1">
    <source>
        <dbReference type="UniProtKB" id="P0A6U8"/>
    </source>
</evidence>
<evidence type="ECO:0000256" key="2">
    <source>
        <dbReference type="SAM" id="MobiDB-lite"/>
    </source>
</evidence>
<evidence type="ECO:0000269" key="3">
    <source>
    </source>
</evidence>
<evidence type="ECO:0000269" key="4">
    <source>
    </source>
</evidence>
<evidence type="ECO:0000269" key="5">
    <source>
    </source>
</evidence>
<evidence type="ECO:0000305" key="6"/>
<evidence type="ECO:0007744" key="7">
    <source>
        <dbReference type="PDB" id="3VUE"/>
    </source>
</evidence>
<evidence type="ECO:0007744" key="8">
    <source>
        <dbReference type="PDB" id="3VUF"/>
    </source>
</evidence>
<evidence type="ECO:0007829" key="9">
    <source>
        <dbReference type="PDB" id="3VUE"/>
    </source>
</evidence>
<dbReference type="EC" id="2.4.1.242"/>
<dbReference type="EMBL" id="X62134">
    <property type="protein sequence ID" value="CAA44065.1"/>
    <property type="molecule type" value="mRNA"/>
</dbReference>
<dbReference type="EMBL" id="X58228">
    <property type="protein sequence ID" value="CAA41186.1"/>
    <property type="molecule type" value="Genomic_DNA"/>
</dbReference>
<dbReference type="EMBL" id="X53694">
    <property type="protein sequence ID" value="CAA37732.1"/>
    <property type="molecule type" value="Genomic_DNA"/>
</dbReference>
<dbReference type="EMBL" id="AF031162">
    <property type="protein sequence ID" value="AAC61675.2"/>
    <property type="molecule type" value="Genomic_DNA"/>
</dbReference>
<dbReference type="EMBL" id="AF141954">
    <property type="protein sequence ID" value="AAF72561.1"/>
    <property type="molecule type" value="Genomic_DNA"/>
</dbReference>
<dbReference type="EMBL" id="AF141955">
    <property type="protein sequence ID" value="AAF72562.1"/>
    <property type="molecule type" value="Genomic_DNA"/>
</dbReference>
<dbReference type="EMBL" id="AB066093">
    <property type="protein sequence ID" value="BAB88209.1"/>
    <property type="molecule type" value="mRNA"/>
</dbReference>
<dbReference type="EMBL" id="AB066094">
    <property type="protein sequence ID" value="BAB88210.1"/>
    <property type="molecule type" value="mRNA"/>
</dbReference>
<dbReference type="EMBL" id="AF515480">
    <property type="protein sequence ID" value="AAN77100.1"/>
    <property type="molecule type" value="mRNA"/>
</dbReference>
<dbReference type="EMBL" id="AF515481">
    <property type="protein sequence ID" value="AAN77101.1"/>
    <property type="molecule type" value="mRNA"/>
</dbReference>
<dbReference type="EMBL" id="AF515482">
    <property type="protein sequence ID" value="AAN77102.1"/>
    <property type="molecule type" value="mRNA"/>
</dbReference>
<dbReference type="EMBL" id="AF515483">
    <property type="protein sequence ID" value="AAN77103.1"/>
    <property type="molecule type" value="mRNA"/>
</dbReference>
<dbReference type="EMBL" id="AF488413">
    <property type="protein sequence ID" value="AAO33149.1"/>
    <property type="molecule type" value="Genomic_DNA"/>
</dbReference>
<dbReference type="EMBL" id="AP002542">
    <property type="protein sequence ID" value="BAB19379.1"/>
    <property type="molecule type" value="Genomic_DNA"/>
</dbReference>
<dbReference type="EMBL" id="AP008212">
    <property type="protein sequence ID" value="BAF18618.1"/>
    <property type="molecule type" value="Genomic_DNA"/>
</dbReference>
<dbReference type="EMBL" id="AP014962">
    <property type="protein sequence ID" value="BAS95999.1"/>
    <property type="molecule type" value="Genomic_DNA"/>
</dbReference>
<dbReference type="EMBL" id="M55039">
    <property type="protein sequence ID" value="AAA33918.1"/>
    <property type="molecule type" value="Genomic_DNA"/>
</dbReference>
<dbReference type="PIR" id="JQ0703">
    <property type="entry name" value="JQ0703"/>
</dbReference>
<dbReference type="PIR" id="S11481">
    <property type="entry name" value="S11481"/>
</dbReference>
<dbReference type="RefSeq" id="XP_015644490.1">
    <property type="nucleotide sequence ID" value="XM_015789004.1"/>
</dbReference>
<dbReference type="RefSeq" id="XP_015644491.1">
    <property type="nucleotide sequence ID" value="XM_015789005.1"/>
</dbReference>
<dbReference type="RefSeq" id="XP_015644492.1">
    <property type="nucleotide sequence ID" value="XM_015789006.1"/>
</dbReference>
<dbReference type="PDB" id="3VUE">
    <property type="method" value="X-ray"/>
    <property type="resolution" value="2.70 A"/>
    <property type="chains" value="A=83-609"/>
</dbReference>
<dbReference type="PDB" id="3VUF">
    <property type="method" value="X-ray"/>
    <property type="resolution" value="3.00 A"/>
    <property type="chains" value="A=83-609"/>
</dbReference>
<dbReference type="PDBsum" id="3VUE"/>
<dbReference type="PDBsum" id="3VUF"/>
<dbReference type="SMR" id="Q0DEV5"/>
<dbReference type="FunCoup" id="Q0DEV5">
    <property type="interactions" value="139"/>
</dbReference>
<dbReference type="STRING" id="39947.Q0DEV5"/>
<dbReference type="Allergome" id="11008">
    <property type="allergen name" value="Ory s GBSS_I"/>
</dbReference>
<dbReference type="CAZy" id="GT5">
    <property type="family name" value="Glycosyltransferase Family 5"/>
</dbReference>
<dbReference type="PaxDb" id="39947-Q0DEV5"/>
<dbReference type="EnsemblPlants" id="Os06t0133000-01">
    <property type="protein sequence ID" value="Os06t0133000-01"/>
    <property type="gene ID" value="Os06g0133000"/>
</dbReference>
<dbReference type="EnsemblPlants" id="Os06t0133000-02">
    <property type="protein sequence ID" value="Os06t0133000-02"/>
    <property type="gene ID" value="Os06g0133000"/>
</dbReference>
<dbReference type="GeneID" id="4340018"/>
<dbReference type="Gramene" id="Os06t0133000-01">
    <property type="protein sequence ID" value="Os06t0133000-01"/>
    <property type="gene ID" value="Os06g0133000"/>
</dbReference>
<dbReference type="Gramene" id="Os06t0133000-02">
    <property type="protein sequence ID" value="Os06t0133000-02"/>
    <property type="gene ID" value="Os06g0133000"/>
</dbReference>
<dbReference type="KEGG" id="dosa:Os06g0133000"/>
<dbReference type="KEGG" id="osa:4340018"/>
<dbReference type="eggNOG" id="ENOG502QQX3">
    <property type="taxonomic scope" value="Eukaryota"/>
</dbReference>
<dbReference type="HOGENOM" id="CLU_009583_18_2_1"/>
<dbReference type="InParanoid" id="Q0DEV5"/>
<dbReference type="OMA" id="GTDYKDN"/>
<dbReference type="OrthoDB" id="512920at2759"/>
<dbReference type="PlantReactome" id="R-OSA-9626305">
    <property type="pathway name" value="Regulatory network of nutrient accumulation"/>
</dbReference>
<dbReference type="UniPathway" id="UPA00152"/>
<dbReference type="EvolutionaryTrace" id="Q0DEV5"/>
<dbReference type="Proteomes" id="UP000000763">
    <property type="component" value="Chromosome 6"/>
</dbReference>
<dbReference type="Proteomes" id="UP000059680">
    <property type="component" value="Chromosome 6"/>
</dbReference>
<dbReference type="ExpressionAtlas" id="Q0DEV5">
    <property type="expression patterns" value="baseline and differential"/>
</dbReference>
<dbReference type="GO" id="GO:0009501">
    <property type="term" value="C:amyloplast"/>
    <property type="evidence" value="ECO:0007669"/>
    <property type="project" value="UniProtKB-SubCell"/>
</dbReference>
<dbReference type="GO" id="GO:0009507">
    <property type="term" value="C:chloroplast"/>
    <property type="evidence" value="ECO:0007669"/>
    <property type="project" value="UniProtKB-SubCell"/>
</dbReference>
<dbReference type="GO" id="GO:0043531">
    <property type="term" value="F:ADP binding"/>
    <property type="evidence" value="ECO:0000314"/>
    <property type="project" value="UniProtKB"/>
</dbReference>
<dbReference type="GO" id="GO:0004373">
    <property type="term" value="F:alpha-1,4-glucan glucosyltransferase (UDP-glucose donor) activity"/>
    <property type="evidence" value="ECO:0007669"/>
    <property type="project" value="InterPro"/>
</dbReference>
<dbReference type="GO" id="GO:0019863">
    <property type="term" value="F:IgE binding"/>
    <property type="evidence" value="ECO:0000314"/>
    <property type="project" value="UniProtKB"/>
</dbReference>
<dbReference type="GO" id="GO:0019252">
    <property type="term" value="P:starch biosynthetic process"/>
    <property type="evidence" value="ECO:0007669"/>
    <property type="project" value="UniProtKB-UniPathway"/>
</dbReference>
<dbReference type="CDD" id="cd03791">
    <property type="entry name" value="GT5_Glycogen_synthase_DULL1-like"/>
    <property type="match status" value="1"/>
</dbReference>
<dbReference type="FunFam" id="3.40.50.2000:FF:000073">
    <property type="entry name" value="Starch synthase, chloroplastic/amyloplastic"/>
    <property type="match status" value="1"/>
</dbReference>
<dbReference type="FunFam" id="3.40.50.2000:FF:000090">
    <property type="entry name" value="Starch synthase, chloroplastic/amyloplastic"/>
    <property type="match status" value="1"/>
</dbReference>
<dbReference type="Gene3D" id="3.40.50.2000">
    <property type="entry name" value="Glycogen Phosphorylase B"/>
    <property type="match status" value="2"/>
</dbReference>
<dbReference type="HAMAP" id="MF_00484">
    <property type="entry name" value="Glycogen_synth"/>
    <property type="match status" value="1"/>
</dbReference>
<dbReference type="InterPro" id="IPR001296">
    <property type="entry name" value="Glyco_trans_1"/>
</dbReference>
<dbReference type="InterPro" id="IPR011835">
    <property type="entry name" value="GS/SS"/>
</dbReference>
<dbReference type="InterPro" id="IPR013534">
    <property type="entry name" value="Starch_synth_cat_dom"/>
</dbReference>
<dbReference type="NCBIfam" id="TIGR02095">
    <property type="entry name" value="glgA"/>
    <property type="match status" value="1"/>
</dbReference>
<dbReference type="PANTHER" id="PTHR45825">
    <property type="entry name" value="GRANULE-BOUND STARCH SYNTHASE 1, CHLOROPLASTIC/AMYLOPLASTIC"/>
    <property type="match status" value="1"/>
</dbReference>
<dbReference type="PANTHER" id="PTHR45825:SF3">
    <property type="entry name" value="GRANULE-BOUND STARCH SYNTHASE 1, CHLOROPLASTIC_AMYLOPLASTIC"/>
    <property type="match status" value="1"/>
</dbReference>
<dbReference type="Pfam" id="PF08323">
    <property type="entry name" value="Glyco_transf_5"/>
    <property type="match status" value="1"/>
</dbReference>
<dbReference type="Pfam" id="PF00534">
    <property type="entry name" value="Glycos_transf_1"/>
    <property type="match status" value="1"/>
</dbReference>
<dbReference type="SUPFAM" id="SSF53756">
    <property type="entry name" value="UDP-Glycosyltransferase/glycogen phosphorylase"/>
    <property type="match status" value="1"/>
</dbReference>
<protein>
    <recommendedName>
        <fullName>Granule-bound starch synthase 1, chloroplastic/amyloplastic</fullName>
        <ecNumber>2.4.1.242</ecNumber>
    </recommendedName>
    <alternativeName>
        <fullName>Granule-bound starch synthase I</fullName>
        <shortName>GBSS-I</shortName>
    </alternativeName>
    <allergenName>Ory s GBSS_I</allergenName>
</protein>
<keyword id="KW-0002">3D-structure</keyword>
<keyword id="KW-0020">Allergen</keyword>
<keyword id="KW-0035">Amyloplast</keyword>
<keyword id="KW-0150">Chloroplast</keyword>
<keyword id="KW-0903">Direct protein sequencing</keyword>
<keyword id="KW-1015">Disulfide bond</keyword>
<keyword id="KW-0328">Glycosyltransferase</keyword>
<keyword id="KW-0934">Plastid</keyword>
<keyword id="KW-1185">Reference proteome</keyword>
<keyword id="KW-0750">Starch biosynthesis</keyword>
<keyword id="KW-0808">Transferase</keyword>
<keyword id="KW-0809">Transit peptide</keyword>
<reference key="1">
    <citation type="journal article" date="1992" name="Plant Mol. Biol.">
        <title>Nucleotide sequence of a long cDNA from the rice waxy gene.</title>
        <authorList>
            <person name="Okagaki R.J."/>
        </authorList>
    </citation>
    <scope>NUCLEOTIDE SEQUENCE [MRNA]</scope>
    <source>
        <tissue>Seed</tissue>
    </source>
</reference>
<reference key="2">
    <citation type="journal article" date="1991" name="Plant Cell Physiol.">
        <title>Molecular characterization of the waxy locus of rice (Oryza sativa).</title>
        <authorList>
            <person name="Hirano H.Y."/>
            <person name="Sano Y."/>
        </authorList>
    </citation>
    <scope>NUCLEOTIDE SEQUENCE [GENOMIC DNA]</scope>
    <source>
        <strain>cv. Taichung 65</strain>
        <tissue>Seedling</tissue>
    </source>
</reference>
<reference key="3">
    <citation type="journal article" date="1990" name="Nucleic Acids Res.">
        <title>Nucleotide sequence of rice waxy gene.</title>
        <authorList>
            <person name="Wang Z.Y."/>
            <person name="Wu Z.L."/>
            <person name="Xing Y.Y."/>
            <person name="Zheng F.G."/>
            <person name="Guo X.L."/>
            <person name="Zhang W.G."/>
            <person name="Hong M.M."/>
        </authorList>
    </citation>
    <scope>NUCLEOTIDE SEQUENCE [GENOMIC DNA]</scope>
    <source>
        <strain>cv. Hanfeng</strain>
    </source>
</reference>
<reference key="4">
    <citation type="journal article" date="1998" name="Plant Mol. Biol.">
        <title>Use of alternate splice sites in granule-bound starch synthase mRNA from low-amylose rice varieties.</title>
        <authorList>
            <person name="Frances H."/>
            <person name="Bligh J."/>
            <person name="Larkin P.D."/>
            <person name="Roach P.S."/>
            <person name="Jones C.A."/>
            <person name="Fu H."/>
            <person name="Park W.D."/>
        </authorList>
    </citation>
    <scope>NUCLEOTIDE SEQUENCE [GENOMIC DNA]</scope>
    <source>
        <strain>cv. Lemont</strain>
    </source>
</reference>
<reference key="5">
    <citation type="submission" date="1999-04" db="EMBL/GenBank/DDBJ databases">
        <title>The Wx locus (granule bound starch synthase) is strongly associated with pasting curve characteristics in rice (Oryza sativa L.).</title>
        <authorList>
            <person name="Larkin P.D."/>
            <person name="McClung A.M."/>
            <person name="Ayres N.M."/>
            <person name="Park W.D."/>
        </authorList>
    </citation>
    <scope>NUCLEOTIDE SEQUENCE [GENOMIC DNA]</scope>
    <source>
        <strain>cv. Jodon</strain>
        <strain>cv. Rexmont</strain>
    </source>
</reference>
<reference key="6">
    <citation type="journal article" date="2002" name="Breed. Sci.">
        <title>Molecular characterization of Wx-mq, a novel mutant gene for low-amylose content in endosperm of rice (Oryza sativa L.).</title>
        <authorList>
            <person name="Sato H."/>
            <person name="Suzuki Y."/>
            <person name="Sakai M."/>
            <person name="Imbe T."/>
        </authorList>
    </citation>
    <scope>NUCLEOTIDE SEQUENCE [MRNA]</scope>
    <source>
        <strain>cv. Koshihikari</strain>
        <strain>cv. Milky Queen</strain>
    </source>
</reference>
<reference key="7">
    <citation type="submission" date="2002-05" db="EMBL/GenBank/DDBJ databases">
        <title>Association of single nucleotide polymorphism in the waxy locus with starch viscosity characteristics in rice, Oryza sativa L.</title>
        <authorList>
            <person name="Larkin P.D."/>
            <person name="McClung A.M."/>
            <person name="Park W.D."/>
        </authorList>
    </citation>
    <scope>NUCLEOTIDE SEQUENCE [MRNA]</scope>
    <source>
        <strain>cv. L202</strain>
        <strain>cv. Lemont</strain>
        <strain>cv. Rexmont</strain>
        <strain>cv. Toro-2</strain>
    </source>
</reference>
<reference key="8">
    <citation type="submission" date="2002-02" db="EMBL/GenBank/DDBJ databases">
        <title>Comparative sequence analysis of homologous Wx1 regions in barley, maize, pearl millet, rice, sorghum and diploid wheat.</title>
        <authorList>
            <person name="Ma J."/>
            <person name="SanMiguel P.J."/>
            <person name="Dubcovsky J."/>
            <person name="Shiloff B.A."/>
            <person name="Rostoks N."/>
            <person name="Jiang Z."/>
            <person name="Busso C.S."/>
            <person name="Kleinhofs A."/>
            <person name="Devos K.M."/>
            <person name="Ramakrishna W."/>
            <person name="Bennetzen J.L."/>
        </authorList>
    </citation>
    <scope>NUCLEOTIDE SEQUENCE [GENOMIC DNA]</scope>
    <source>
        <strain>cv. Nipponbare</strain>
    </source>
</reference>
<reference key="9">
    <citation type="journal article" date="2005" name="Nature">
        <title>The map-based sequence of the rice genome.</title>
        <authorList>
            <consortium name="International rice genome sequencing project (IRGSP)"/>
        </authorList>
    </citation>
    <scope>NUCLEOTIDE SEQUENCE [LARGE SCALE GENOMIC DNA]</scope>
    <source>
        <strain>cv. Nipponbare</strain>
    </source>
</reference>
<reference key="10">
    <citation type="journal article" date="2008" name="Nucleic Acids Res.">
        <title>The rice annotation project database (RAP-DB): 2008 update.</title>
        <authorList>
            <consortium name="The rice annotation project (RAP)"/>
        </authorList>
    </citation>
    <scope>GENOME REANNOTATION</scope>
    <source>
        <strain>cv. Nipponbare</strain>
    </source>
</reference>
<reference key="11">
    <citation type="journal article" date="2013" name="Rice">
        <title>Improvement of the Oryza sativa Nipponbare reference genome using next generation sequence and optical map data.</title>
        <authorList>
            <person name="Kawahara Y."/>
            <person name="de la Bastide M."/>
            <person name="Hamilton J.P."/>
            <person name="Kanamori H."/>
            <person name="McCombie W.R."/>
            <person name="Ouyang S."/>
            <person name="Schwartz D.C."/>
            <person name="Tanaka T."/>
            <person name="Wu J."/>
            <person name="Zhou S."/>
            <person name="Childs K.L."/>
            <person name="Davidson R.M."/>
            <person name="Lin H."/>
            <person name="Quesada-Ocampo L."/>
            <person name="Vaillancourt B."/>
            <person name="Sakai H."/>
            <person name="Lee S.S."/>
            <person name="Kim J."/>
            <person name="Numa H."/>
            <person name="Itoh T."/>
            <person name="Buell C.R."/>
            <person name="Matsumoto T."/>
        </authorList>
    </citation>
    <scope>GENOME REANNOTATION</scope>
    <source>
        <strain>cv. Nipponbare</strain>
    </source>
</reference>
<reference key="12">
    <citation type="journal article" date="1995" name="Biochem. Genet.">
        <title>Variation in the primary structure of waxy proteins (granule-bound starch synthase) in diploid cereals.</title>
        <authorList>
            <person name="Taira T."/>
            <person name="Fujita N."/>
            <person name="Takaoka K."/>
            <person name="Uematsu M."/>
            <person name="Wadano A."/>
            <person name="Kozaki S."/>
            <person name="Okabe S."/>
        </authorList>
    </citation>
    <scope>PROTEIN SEQUENCE OF 78-94</scope>
</reference>
<reference key="13">
    <citation type="journal article" date="1991" name="Gene">
        <title>Rapid isolation of a rice waxy sequence: a simple PCR method for the analysis of recombinant plasmids from intact Escherichia coli cells.</title>
        <authorList>
            <person name="Shimada H."/>
            <person name="Tada Y."/>
        </authorList>
    </citation>
    <scope>NUCLEOTIDE SEQUENCE [GENOMIC DNA] OF 153-343</scope>
</reference>
<reference key="14">
    <citation type="journal article" date="2013" name="J. Agric. Food Chem.">
        <title>Identification of rice proteins recognized by the IgE antibodies of patients with food allergies.</title>
        <authorList>
            <person name="Golias J."/>
            <person name="Humlova Z."/>
            <person name="Halada P."/>
            <person name="Habova V."/>
            <person name="Janatkova I."/>
            <person name="Tuckova L."/>
        </authorList>
    </citation>
    <scope>IDENTIFICATION BY MASS SPECTROMETRY</scope>
    <scope>ALLERGEN</scope>
</reference>
<reference key="15">
    <citation type="journal article" date="2012" name="Biosci. Biotechnol. Biochem.">
        <title>Interdomain disulfide bridge in the rice granule bound starch synthase I catalytic domain as elucidated by X-ray structure analysis.</title>
        <authorList>
            <person name="Momma M."/>
            <person name="Fujimoto Z."/>
        </authorList>
    </citation>
    <scope>X-RAY CRYSTALLOGRAPHY (2.70 ANGSTROMS) OF 83-609 IN COMPLEX WITH ADP</scope>
    <scope>DISULFIDE BONDS</scope>
</reference>
<comment type="function">
    <text>Required for the synthesis of amylose in endosperm.</text>
</comment>
<comment type="catalytic activity">
    <reaction>
        <text>an NDP-alpha-D-glucose + [(1-&gt;4)-alpha-D-glucosyl](n) = [(1-&gt;4)-alpha-D-glucosyl](n+1) + a ribonucleoside 5'-diphosphate + H(+)</text>
        <dbReference type="Rhea" id="RHEA:15873"/>
        <dbReference type="Rhea" id="RHEA-COMP:9584"/>
        <dbReference type="Rhea" id="RHEA-COMP:9587"/>
        <dbReference type="ChEBI" id="CHEBI:15378"/>
        <dbReference type="ChEBI" id="CHEBI:15444"/>
        <dbReference type="ChEBI" id="CHEBI:57930"/>
        <dbReference type="ChEBI" id="CHEBI:76533"/>
        <dbReference type="EC" id="2.4.1.242"/>
    </reaction>
</comment>
<comment type="pathway">
    <text>Glycan biosynthesis; starch biosynthesis.</text>
</comment>
<comment type="subcellular location">
    <subcellularLocation>
        <location>Plastid</location>
        <location>Chloroplast</location>
    </subcellularLocation>
    <subcellularLocation>
        <location>Plastid</location>
        <location>Amyloplast</location>
    </subcellularLocation>
    <text>Amyloplast or chloroplast, granule-bound.</text>
</comment>
<comment type="allergen">
    <text evidence="4">Causes an allergic reaction in human. Binds to IgE.</text>
</comment>
<comment type="similarity">
    <text evidence="6">Belongs to the glycosyltransferase 1 family. Bacterial/plant glycogen synthase subfamily.</text>
</comment>
<proteinExistence type="evidence at protein level"/>
<sequence length="609" mass="66476">MSALTTSQLATSATGFGIADRSAPSSLLRHGFQGLKPRSPAGGDATSLSVTTSARATPKQQRSVQRGSRRFPSVVVYATGAGMNVVFVGAEMAPWSKTGGLGDVLGGLPPAMAANGHRVMVISPRYDQYKDAWDTSVVAEIKVADRYERVRFFHCYKRGVDRVFIDHPSFLEKVWGKTGEKIYGPDTGVDYKDNQMRFSLLCQAALEAPRILNLNNNPYFKGTYGEDVVFVCNDWHTGPLASYLKNNYQPNGIYRNAKVAFCIHNISYQGRFAFEDYPELNLSERFRSSFDFIDGYDTPVEGRKINWMKAGILEADRVLTVSPYYAEELISGIARGCELDNIMRLTGITGIVNGMDVSEWDPSKDKYITAKYDATTAIEAKALNKEALQAEAGLPVDRKIPLIAFIGRLEEQKGPDVMAAAIPELMQEDVQIVLLGTGKKKFEKLLKSMEEKYPGKVRAVVKFNAPLAHLIMAGADVLAVPSRFEPCGLIQLQGMRYGTPCACASTGGLVDTVIEGKTGFHMGRLSVDCKVVEPSDVKKVAATLKRAIKVVGTPAYEEMVRNCMNQDLSWKGPAKNWENVLLGLGVAGSAPGIEGDEIAPLAKENVAAP</sequence>
<organism>
    <name type="scientific">Oryza sativa subsp. japonica</name>
    <name type="common">Rice</name>
    <dbReference type="NCBI Taxonomy" id="39947"/>
    <lineage>
        <taxon>Eukaryota</taxon>
        <taxon>Viridiplantae</taxon>
        <taxon>Streptophyta</taxon>
        <taxon>Embryophyta</taxon>
        <taxon>Tracheophyta</taxon>
        <taxon>Spermatophyta</taxon>
        <taxon>Magnoliopsida</taxon>
        <taxon>Liliopsida</taxon>
        <taxon>Poales</taxon>
        <taxon>Poaceae</taxon>
        <taxon>BOP clade</taxon>
        <taxon>Oryzoideae</taxon>
        <taxon>Oryzeae</taxon>
        <taxon>Oryzinae</taxon>
        <taxon>Oryza</taxon>
        <taxon>Oryza sativa</taxon>
    </lineage>
</organism>
<feature type="transit peptide" description="Chloroplast" evidence="5">
    <location>
        <begin position="1"/>
        <end position="77"/>
    </location>
</feature>
<feature type="chain" id="PRO_0000011132" description="Granule-bound starch synthase 1, chloroplastic/amyloplastic">
    <location>
        <begin position="78"/>
        <end position="609"/>
    </location>
</feature>
<feature type="region of interest" description="Disordered" evidence="2">
    <location>
        <begin position="29"/>
        <end position="67"/>
    </location>
</feature>
<feature type="compositionally biased region" description="Polar residues" evidence="2">
    <location>
        <begin position="46"/>
        <end position="66"/>
    </location>
</feature>
<feature type="binding site" evidence="1">
    <location>
        <position position="97"/>
    </location>
    <ligand>
        <name>ADP-alpha-D-glucose</name>
        <dbReference type="ChEBI" id="CHEBI:57498"/>
    </ligand>
</feature>
<feature type="binding site" evidence="3 8">
    <location>
        <position position="100"/>
    </location>
    <ligand>
        <name>ADP</name>
        <dbReference type="ChEBI" id="CHEBI:456216"/>
    </ligand>
</feature>
<feature type="binding site" evidence="3 8">
    <location>
        <position position="408"/>
    </location>
    <ligand>
        <name>ADP</name>
        <dbReference type="ChEBI" id="CHEBI:456216"/>
    </ligand>
</feature>
<feature type="binding site" evidence="3 8">
    <location>
        <position position="413"/>
    </location>
    <ligand>
        <name>ADP</name>
        <dbReference type="ChEBI" id="CHEBI:456216"/>
    </ligand>
</feature>
<feature type="binding site" evidence="3 8">
    <location>
        <position position="462"/>
    </location>
    <ligand>
        <name>ADP</name>
        <dbReference type="ChEBI" id="CHEBI:456216"/>
    </ligand>
</feature>
<feature type="binding site" evidence="3 8">
    <location>
        <position position="493"/>
    </location>
    <ligand>
        <name>ADP</name>
        <dbReference type="ChEBI" id="CHEBI:456216"/>
    </ligand>
</feature>
<feature type="disulfide bond" evidence="3 7 8">
    <location>
        <begin position="337"/>
        <end position="529"/>
    </location>
</feature>
<feature type="sequence variant" description="In strain: cv. Lemont.">
    <original>Y</original>
    <variation>S</variation>
    <location>
        <position position="224"/>
    </location>
</feature>
<feature type="sequence variant" description="In strain: cv. Rexmont.">
    <original>P</original>
    <variation>S</variation>
    <location>
        <position position="415"/>
    </location>
</feature>
<feature type="sequence conflict" description="In Ref. 6; BAB88209." evidence="6" ref="6">
    <original>R</original>
    <variation>H</variation>
    <location>
        <position position="158"/>
    </location>
</feature>
<feature type="sequence conflict" description="In Ref. 6; BAB88209." evidence="6" ref="6">
    <original>Y</original>
    <variation>H</variation>
    <location>
        <position position="191"/>
    </location>
</feature>
<feature type="sequence conflict" description="In Ref. 13; AAA33918." evidence="6" ref="13">
    <original>N</original>
    <variation>T</variation>
    <location>
        <position position="247"/>
    </location>
</feature>
<feature type="sequence conflict" description="In Ref. 13; AAA33918." evidence="6" ref="13">
    <original>P</original>
    <variation>T</variation>
    <location>
        <position position="250"/>
    </location>
</feature>
<feature type="strand" evidence="9">
    <location>
        <begin position="84"/>
        <end position="88"/>
    </location>
</feature>
<feature type="turn" evidence="9">
    <location>
        <begin position="93"/>
        <end position="95"/>
    </location>
</feature>
<feature type="helix" evidence="9">
    <location>
        <begin position="100"/>
        <end position="113"/>
    </location>
</feature>
<feature type="turn" evidence="9">
    <location>
        <begin position="114"/>
        <end position="116"/>
    </location>
</feature>
<feature type="strand" evidence="9">
    <location>
        <begin position="118"/>
        <end position="124"/>
    </location>
</feature>
<feature type="strand" evidence="9">
    <location>
        <begin position="133"/>
        <end position="143"/>
    </location>
</feature>
<feature type="strand" evidence="9">
    <location>
        <begin position="146"/>
        <end position="154"/>
    </location>
</feature>
<feature type="strand" evidence="9">
    <location>
        <begin position="160"/>
        <end position="166"/>
    </location>
</feature>
<feature type="turn" evidence="9">
    <location>
        <begin position="168"/>
        <end position="171"/>
    </location>
</feature>
<feature type="helix" evidence="9">
    <location>
        <begin position="193"/>
        <end position="211"/>
    </location>
</feature>
<feature type="strand" evidence="9">
    <location>
        <begin position="228"/>
        <end position="234"/>
    </location>
</feature>
<feature type="helix" evidence="9">
    <location>
        <begin position="235"/>
        <end position="237"/>
    </location>
</feature>
<feature type="helix" evidence="9">
    <location>
        <begin position="240"/>
        <end position="247"/>
    </location>
</feature>
<feature type="turn" evidence="9">
    <location>
        <begin position="248"/>
        <end position="252"/>
    </location>
</feature>
<feature type="strand" evidence="9">
    <location>
        <begin position="258"/>
        <end position="264"/>
    </location>
</feature>
<feature type="strand" evidence="9">
    <location>
        <begin position="271"/>
        <end position="273"/>
    </location>
</feature>
<feature type="helix" evidence="9">
    <location>
        <begin position="274"/>
        <end position="280"/>
    </location>
</feature>
<feature type="helix" evidence="9">
    <location>
        <begin position="284"/>
        <end position="286"/>
    </location>
</feature>
<feature type="helix" evidence="9">
    <location>
        <begin position="287"/>
        <end position="290"/>
    </location>
</feature>
<feature type="strand" evidence="9">
    <location>
        <begin position="291"/>
        <end position="294"/>
    </location>
</feature>
<feature type="turn" evidence="9">
    <location>
        <begin position="295"/>
        <end position="297"/>
    </location>
</feature>
<feature type="strand" evidence="9">
    <location>
        <begin position="302"/>
        <end position="306"/>
    </location>
</feature>
<feature type="helix" evidence="9">
    <location>
        <begin position="307"/>
        <end position="314"/>
    </location>
</feature>
<feature type="strand" evidence="9">
    <location>
        <begin position="316"/>
        <end position="321"/>
    </location>
</feature>
<feature type="helix" evidence="9">
    <location>
        <begin position="323"/>
        <end position="330"/>
    </location>
</feature>
<feature type="strand" evidence="9">
    <location>
        <begin position="337"/>
        <end position="339"/>
    </location>
</feature>
<feature type="turn" evidence="9">
    <location>
        <begin position="357"/>
        <end position="359"/>
    </location>
</feature>
<feature type="turn" evidence="9">
    <location>
        <begin position="362"/>
        <end position="364"/>
    </location>
</feature>
<feature type="strand" evidence="9">
    <location>
        <begin position="366"/>
        <end position="369"/>
    </location>
</feature>
<feature type="turn" evidence="9">
    <location>
        <begin position="374"/>
        <end position="376"/>
    </location>
</feature>
<feature type="helix" evidence="9">
    <location>
        <begin position="377"/>
        <end position="391"/>
    </location>
</feature>
<feature type="strand" evidence="9">
    <location>
        <begin position="402"/>
        <end position="406"/>
    </location>
</feature>
<feature type="helix" evidence="9">
    <location>
        <begin position="411"/>
        <end position="413"/>
    </location>
</feature>
<feature type="helix" evidence="9">
    <location>
        <begin position="415"/>
        <end position="425"/>
    </location>
</feature>
<feature type="strand" evidence="9">
    <location>
        <begin position="431"/>
        <end position="435"/>
    </location>
</feature>
<feature type="helix" evidence="9">
    <location>
        <begin position="440"/>
        <end position="452"/>
    </location>
</feature>
<feature type="turn" evidence="9">
    <location>
        <begin position="454"/>
        <end position="456"/>
    </location>
</feature>
<feature type="strand" evidence="9">
    <location>
        <begin position="457"/>
        <end position="460"/>
    </location>
</feature>
<feature type="helix" evidence="9">
    <location>
        <begin position="465"/>
        <end position="474"/>
    </location>
</feature>
<feature type="strand" evidence="9">
    <location>
        <begin position="476"/>
        <end position="480"/>
    </location>
</feature>
<feature type="helix" evidence="9">
    <location>
        <begin position="490"/>
        <end position="496"/>
    </location>
</feature>
<feature type="strand" evidence="9">
    <location>
        <begin position="501"/>
        <end position="503"/>
    </location>
</feature>
<feature type="helix" evidence="9">
    <location>
        <begin position="508"/>
        <end position="512"/>
    </location>
</feature>
<feature type="turn" evidence="9">
    <location>
        <begin position="515"/>
        <end position="517"/>
    </location>
</feature>
<feature type="strand" evidence="9">
    <location>
        <begin position="518"/>
        <end position="521"/>
    </location>
</feature>
<feature type="helix" evidence="9">
    <location>
        <begin position="534"/>
        <end position="550"/>
    </location>
</feature>
<feature type="helix" evidence="9">
    <location>
        <begin position="554"/>
        <end position="565"/>
    </location>
</feature>
<feature type="helix" evidence="9">
    <location>
        <begin position="571"/>
        <end position="582"/>
    </location>
</feature>
<accession>Q0DEV5</accession>
<accession>P19395</accession>
<accession>Q1ZZT5</accession>
<accession>Q43012</accession>
<accession>Q43013</accession>
<accession>Q71F57</accession>
<accession>Q8GZD6</accession>
<accession>Q8S9C4</accession>
<accession>Q94LY7</accession>
<accession>Q9S7R1</accession>
<accession>Q9S7U4</accession>
<name>SSG1_ORYSJ</name>